<gene>
    <name evidence="1" type="primary">bioB</name>
    <name type="ordered locus">BCE_4184</name>
</gene>
<reference key="1">
    <citation type="journal article" date="2004" name="Nucleic Acids Res.">
        <title>The genome sequence of Bacillus cereus ATCC 10987 reveals metabolic adaptations and a large plasmid related to Bacillus anthracis pXO1.</title>
        <authorList>
            <person name="Rasko D.A."/>
            <person name="Ravel J."/>
            <person name="Oekstad O.A."/>
            <person name="Helgason E."/>
            <person name="Cer R.Z."/>
            <person name="Jiang L."/>
            <person name="Shores K.A."/>
            <person name="Fouts D.E."/>
            <person name="Tourasse N.J."/>
            <person name="Angiuoli S.V."/>
            <person name="Kolonay J.F."/>
            <person name="Nelson W.C."/>
            <person name="Kolstoe A.-B."/>
            <person name="Fraser C.M."/>
            <person name="Read T.D."/>
        </authorList>
    </citation>
    <scope>NUCLEOTIDE SEQUENCE [LARGE SCALE GENOMIC DNA]</scope>
    <source>
        <strain>ATCC 10987 / NRS 248</strain>
    </source>
</reference>
<protein>
    <recommendedName>
        <fullName evidence="1">Biotin synthase</fullName>
        <ecNumber evidence="1">2.8.1.6</ecNumber>
    </recommendedName>
</protein>
<sequence length="332" mass="36980">MKQVQTKRDWKKLAYDVVEEKVITKEDAIAILEADDTEILEIMNAAYIIRHHHFGKKVKLNMIINTKSGLCPEDCGYCSQSIISEAPIDKYAWLTQEKIVEGAHEAIRRKAGTYCIVASGRRPTDKEVNHVIGAVKEIRETTDLKICCCLGFLNEDQAGRLAEAGVHRYNHNLNTHVNNYESICSTHTYDDRVDTVQKAKQAGISPCSGAIFGMGETIEERAEIAFELQRIDADSIPCNFLVAVKGTPLEGQKELTPVECLKVLAMMRFVNPTKEIRISGGREINLRSVQPIGLFAANSIFVGDYLTTAGQEPTADWGMIEDLGFEIEECAL</sequence>
<accession>Q731I2</accession>
<organism>
    <name type="scientific">Bacillus cereus (strain ATCC 10987 / NRS 248)</name>
    <dbReference type="NCBI Taxonomy" id="222523"/>
    <lineage>
        <taxon>Bacteria</taxon>
        <taxon>Bacillati</taxon>
        <taxon>Bacillota</taxon>
        <taxon>Bacilli</taxon>
        <taxon>Bacillales</taxon>
        <taxon>Bacillaceae</taxon>
        <taxon>Bacillus</taxon>
        <taxon>Bacillus cereus group</taxon>
    </lineage>
</organism>
<name>BIOB_BACC1</name>
<evidence type="ECO:0000255" key="1">
    <source>
        <dbReference type="HAMAP-Rule" id="MF_01694"/>
    </source>
</evidence>
<evidence type="ECO:0000255" key="2">
    <source>
        <dbReference type="PROSITE-ProRule" id="PRU01266"/>
    </source>
</evidence>
<comment type="function">
    <text evidence="1">Catalyzes the conversion of dethiobiotin (DTB) to biotin by the insertion of a sulfur atom into dethiobiotin via a radical-based mechanism.</text>
</comment>
<comment type="catalytic activity">
    <reaction evidence="1">
        <text>(4R,5S)-dethiobiotin + (sulfur carrier)-SH + 2 reduced [2Fe-2S]-[ferredoxin] + 2 S-adenosyl-L-methionine = (sulfur carrier)-H + biotin + 2 5'-deoxyadenosine + 2 L-methionine + 2 oxidized [2Fe-2S]-[ferredoxin]</text>
        <dbReference type="Rhea" id="RHEA:22060"/>
        <dbReference type="Rhea" id="RHEA-COMP:10000"/>
        <dbReference type="Rhea" id="RHEA-COMP:10001"/>
        <dbReference type="Rhea" id="RHEA-COMP:14737"/>
        <dbReference type="Rhea" id="RHEA-COMP:14739"/>
        <dbReference type="ChEBI" id="CHEBI:17319"/>
        <dbReference type="ChEBI" id="CHEBI:29917"/>
        <dbReference type="ChEBI" id="CHEBI:33737"/>
        <dbReference type="ChEBI" id="CHEBI:33738"/>
        <dbReference type="ChEBI" id="CHEBI:57586"/>
        <dbReference type="ChEBI" id="CHEBI:57844"/>
        <dbReference type="ChEBI" id="CHEBI:59789"/>
        <dbReference type="ChEBI" id="CHEBI:64428"/>
        <dbReference type="ChEBI" id="CHEBI:149473"/>
        <dbReference type="EC" id="2.8.1.6"/>
    </reaction>
</comment>
<comment type="cofactor">
    <cofactor evidence="1">
        <name>[4Fe-4S] cluster</name>
        <dbReference type="ChEBI" id="CHEBI:49883"/>
    </cofactor>
    <text evidence="1">Binds 1 [4Fe-4S] cluster. The cluster is coordinated with 3 cysteines and an exchangeable S-adenosyl-L-methionine.</text>
</comment>
<comment type="cofactor">
    <cofactor evidence="1">
        <name>[2Fe-2S] cluster</name>
        <dbReference type="ChEBI" id="CHEBI:190135"/>
    </cofactor>
    <text evidence="1">Binds 1 [2Fe-2S] cluster. The cluster is coordinated with 3 cysteines and 1 arginine.</text>
</comment>
<comment type="pathway">
    <text evidence="1">Cofactor biosynthesis; biotin biosynthesis; biotin from 7,8-diaminononanoate: step 2/2.</text>
</comment>
<comment type="subunit">
    <text evidence="1">Homodimer.</text>
</comment>
<comment type="similarity">
    <text evidence="1">Belongs to the radical SAM superfamily. Biotin synthase family.</text>
</comment>
<feature type="chain" id="PRO_0000381219" description="Biotin synthase">
    <location>
        <begin position="1"/>
        <end position="332"/>
    </location>
</feature>
<feature type="domain" description="Radical SAM core" evidence="2">
    <location>
        <begin position="53"/>
        <end position="282"/>
    </location>
</feature>
<feature type="binding site" evidence="1">
    <location>
        <position position="71"/>
    </location>
    <ligand>
        <name>[4Fe-4S] cluster</name>
        <dbReference type="ChEBI" id="CHEBI:49883"/>
        <note>4Fe-4S-S-AdoMet</note>
    </ligand>
</feature>
<feature type="binding site" evidence="1">
    <location>
        <position position="75"/>
    </location>
    <ligand>
        <name>[4Fe-4S] cluster</name>
        <dbReference type="ChEBI" id="CHEBI:49883"/>
        <note>4Fe-4S-S-AdoMet</note>
    </ligand>
</feature>
<feature type="binding site" evidence="1">
    <location>
        <position position="78"/>
    </location>
    <ligand>
        <name>[4Fe-4S] cluster</name>
        <dbReference type="ChEBI" id="CHEBI:49883"/>
        <note>4Fe-4S-S-AdoMet</note>
    </ligand>
</feature>
<feature type="binding site" evidence="1">
    <location>
        <position position="115"/>
    </location>
    <ligand>
        <name>[2Fe-2S] cluster</name>
        <dbReference type="ChEBI" id="CHEBI:190135"/>
    </ligand>
</feature>
<feature type="binding site" evidence="1">
    <location>
        <position position="147"/>
    </location>
    <ligand>
        <name>[2Fe-2S] cluster</name>
        <dbReference type="ChEBI" id="CHEBI:190135"/>
    </ligand>
</feature>
<feature type="binding site" evidence="1">
    <location>
        <position position="207"/>
    </location>
    <ligand>
        <name>[2Fe-2S] cluster</name>
        <dbReference type="ChEBI" id="CHEBI:190135"/>
    </ligand>
</feature>
<feature type="binding site" evidence="1">
    <location>
        <position position="277"/>
    </location>
    <ligand>
        <name>[2Fe-2S] cluster</name>
        <dbReference type="ChEBI" id="CHEBI:190135"/>
    </ligand>
</feature>
<dbReference type="EC" id="2.8.1.6" evidence="1"/>
<dbReference type="EMBL" id="AE017194">
    <property type="protein sequence ID" value="AAS43085.1"/>
    <property type="molecule type" value="Genomic_DNA"/>
</dbReference>
<dbReference type="SMR" id="Q731I2"/>
<dbReference type="KEGG" id="bca:BCE_4184"/>
<dbReference type="HOGENOM" id="CLU_033172_2_1_9"/>
<dbReference type="UniPathway" id="UPA00078">
    <property type="reaction ID" value="UER00162"/>
</dbReference>
<dbReference type="Proteomes" id="UP000002527">
    <property type="component" value="Chromosome"/>
</dbReference>
<dbReference type="GO" id="GO:0051537">
    <property type="term" value="F:2 iron, 2 sulfur cluster binding"/>
    <property type="evidence" value="ECO:0007669"/>
    <property type="project" value="UniProtKB-KW"/>
</dbReference>
<dbReference type="GO" id="GO:0051539">
    <property type="term" value="F:4 iron, 4 sulfur cluster binding"/>
    <property type="evidence" value="ECO:0007669"/>
    <property type="project" value="UniProtKB-KW"/>
</dbReference>
<dbReference type="GO" id="GO:0004076">
    <property type="term" value="F:biotin synthase activity"/>
    <property type="evidence" value="ECO:0007669"/>
    <property type="project" value="UniProtKB-UniRule"/>
</dbReference>
<dbReference type="GO" id="GO:0005506">
    <property type="term" value="F:iron ion binding"/>
    <property type="evidence" value="ECO:0007669"/>
    <property type="project" value="UniProtKB-UniRule"/>
</dbReference>
<dbReference type="GO" id="GO:0009102">
    <property type="term" value="P:biotin biosynthetic process"/>
    <property type="evidence" value="ECO:0007669"/>
    <property type="project" value="UniProtKB-UniRule"/>
</dbReference>
<dbReference type="CDD" id="cd01335">
    <property type="entry name" value="Radical_SAM"/>
    <property type="match status" value="1"/>
</dbReference>
<dbReference type="FunFam" id="3.20.20.70:FF:000026">
    <property type="entry name" value="Biotin synthase"/>
    <property type="match status" value="1"/>
</dbReference>
<dbReference type="Gene3D" id="3.20.20.70">
    <property type="entry name" value="Aldolase class I"/>
    <property type="match status" value="1"/>
</dbReference>
<dbReference type="HAMAP" id="MF_01694">
    <property type="entry name" value="BioB"/>
    <property type="match status" value="1"/>
</dbReference>
<dbReference type="InterPro" id="IPR013785">
    <property type="entry name" value="Aldolase_TIM"/>
</dbReference>
<dbReference type="InterPro" id="IPR010722">
    <property type="entry name" value="BATS_dom"/>
</dbReference>
<dbReference type="InterPro" id="IPR002684">
    <property type="entry name" value="Biotin_synth/BioAB"/>
</dbReference>
<dbReference type="InterPro" id="IPR024177">
    <property type="entry name" value="Biotin_synthase"/>
</dbReference>
<dbReference type="InterPro" id="IPR006638">
    <property type="entry name" value="Elp3/MiaA/NifB-like_rSAM"/>
</dbReference>
<dbReference type="InterPro" id="IPR007197">
    <property type="entry name" value="rSAM"/>
</dbReference>
<dbReference type="NCBIfam" id="TIGR00433">
    <property type="entry name" value="bioB"/>
    <property type="match status" value="1"/>
</dbReference>
<dbReference type="PANTHER" id="PTHR22976">
    <property type="entry name" value="BIOTIN SYNTHASE"/>
    <property type="match status" value="1"/>
</dbReference>
<dbReference type="PANTHER" id="PTHR22976:SF2">
    <property type="entry name" value="BIOTIN SYNTHASE, MITOCHONDRIAL"/>
    <property type="match status" value="1"/>
</dbReference>
<dbReference type="Pfam" id="PF06968">
    <property type="entry name" value="BATS"/>
    <property type="match status" value="1"/>
</dbReference>
<dbReference type="Pfam" id="PF04055">
    <property type="entry name" value="Radical_SAM"/>
    <property type="match status" value="1"/>
</dbReference>
<dbReference type="PIRSF" id="PIRSF001619">
    <property type="entry name" value="Biotin_synth"/>
    <property type="match status" value="1"/>
</dbReference>
<dbReference type="SFLD" id="SFLDG01278">
    <property type="entry name" value="biotin_synthase_like"/>
    <property type="match status" value="1"/>
</dbReference>
<dbReference type="SFLD" id="SFLDS00029">
    <property type="entry name" value="Radical_SAM"/>
    <property type="match status" value="1"/>
</dbReference>
<dbReference type="SMART" id="SM00876">
    <property type="entry name" value="BATS"/>
    <property type="match status" value="1"/>
</dbReference>
<dbReference type="SMART" id="SM00729">
    <property type="entry name" value="Elp3"/>
    <property type="match status" value="1"/>
</dbReference>
<dbReference type="SUPFAM" id="SSF102114">
    <property type="entry name" value="Radical SAM enzymes"/>
    <property type="match status" value="1"/>
</dbReference>
<dbReference type="PROSITE" id="PS51918">
    <property type="entry name" value="RADICAL_SAM"/>
    <property type="match status" value="1"/>
</dbReference>
<keyword id="KW-0001">2Fe-2S</keyword>
<keyword id="KW-0004">4Fe-4S</keyword>
<keyword id="KW-0093">Biotin biosynthesis</keyword>
<keyword id="KW-0408">Iron</keyword>
<keyword id="KW-0411">Iron-sulfur</keyword>
<keyword id="KW-0479">Metal-binding</keyword>
<keyword id="KW-0949">S-adenosyl-L-methionine</keyword>
<keyword id="KW-0808">Transferase</keyword>
<proteinExistence type="inferred from homology"/>